<protein>
    <recommendedName>
        <fullName evidence="1">Ribosomal protein L11 methyltransferase</fullName>
        <shortName evidence="1">L11 Mtase</shortName>
        <ecNumber evidence="1">2.1.1.-</ecNumber>
    </recommendedName>
</protein>
<organism>
    <name type="scientific">Lactobacillus gasseri (strain ATCC 33323 / DSM 20243 / BCRC 14619 / CIP 102991 / JCM 1131 / KCTC 3163 / NCIMB 11718 / NCTC 13722 / AM63)</name>
    <dbReference type="NCBI Taxonomy" id="324831"/>
    <lineage>
        <taxon>Bacteria</taxon>
        <taxon>Bacillati</taxon>
        <taxon>Bacillota</taxon>
        <taxon>Bacilli</taxon>
        <taxon>Lactobacillales</taxon>
        <taxon>Lactobacillaceae</taxon>
        <taxon>Lactobacillus</taxon>
    </lineage>
</organism>
<dbReference type="EC" id="2.1.1.-" evidence="1"/>
<dbReference type="EMBL" id="CP000413">
    <property type="protein sequence ID" value="ABJ60244.1"/>
    <property type="molecule type" value="Genomic_DNA"/>
</dbReference>
<dbReference type="RefSeq" id="WP_003647441.1">
    <property type="nucleotide sequence ID" value="NZ_WBMG01000005.1"/>
</dbReference>
<dbReference type="SMR" id="Q043X8"/>
<dbReference type="GeneID" id="29639376"/>
<dbReference type="KEGG" id="lga:LGAS_0855"/>
<dbReference type="HOGENOM" id="CLU_049382_0_1_9"/>
<dbReference type="BioCyc" id="LGAS324831:G1G6Y-848-MONOMER"/>
<dbReference type="Proteomes" id="UP000000664">
    <property type="component" value="Chromosome"/>
</dbReference>
<dbReference type="GO" id="GO:0005737">
    <property type="term" value="C:cytoplasm"/>
    <property type="evidence" value="ECO:0007669"/>
    <property type="project" value="UniProtKB-SubCell"/>
</dbReference>
<dbReference type="GO" id="GO:0016279">
    <property type="term" value="F:protein-lysine N-methyltransferase activity"/>
    <property type="evidence" value="ECO:0007669"/>
    <property type="project" value="RHEA"/>
</dbReference>
<dbReference type="GO" id="GO:0032259">
    <property type="term" value="P:methylation"/>
    <property type="evidence" value="ECO:0007669"/>
    <property type="project" value="UniProtKB-KW"/>
</dbReference>
<dbReference type="CDD" id="cd02440">
    <property type="entry name" value="AdoMet_MTases"/>
    <property type="match status" value="1"/>
</dbReference>
<dbReference type="Gene3D" id="3.40.50.150">
    <property type="entry name" value="Vaccinia Virus protein VP39"/>
    <property type="match status" value="1"/>
</dbReference>
<dbReference type="HAMAP" id="MF_00735">
    <property type="entry name" value="Methyltr_PrmA"/>
    <property type="match status" value="1"/>
</dbReference>
<dbReference type="InterPro" id="IPR050078">
    <property type="entry name" value="Ribosomal_L11_MeTrfase_PrmA"/>
</dbReference>
<dbReference type="InterPro" id="IPR004498">
    <property type="entry name" value="Ribosomal_PrmA_MeTrfase"/>
</dbReference>
<dbReference type="InterPro" id="IPR029063">
    <property type="entry name" value="SAM-dependent_MTases_sf"/>
</dbReference>
<dbReference type="NCBIfam" id="TIGR00406">
    <property type="entry name" value="prmA"/>
    <property type="match status" value="1"/>
</dbReference>
<dbReference type="PANTHER" id="PTHR43648">
    <property type="entry name" value="ELECTRON TRANSFER FLAVOPROTEIN BETA SUBUNIT LYSINE METHYLTRANSFERASE"/>
    <property type="match status" value="1"/>
</dbReference>
<dbReference type="PANTHER" id="PTHR43648:SF1">
    <property type="entry name" value="ELECTRON TRANSFER FLAVOPROTEIN BETA SUBUNIT LYSINE METHYLTRANSFERASE"/>
    <property type="match status" value="1"/>
</dbReference>
<dbReference type="Pfam" id="PF06325">
    <property type="entry name" value="PrmA"/>
    <property type="match status" value="1"/>
</dbReference>
<dbReference type="PIRSF" id="PIRSF000401">
    <property type="entry name" value="RPL11_MTase"/>
    <property type="match status" value="1"/>
</dbReference>
<dbReference type="SUPFAM" id="SSF53335">
    <property type="entry name" value="S-adenosyl-L-methionine-dependent methyltransferases"/>
    <property type="match status" value="1"/>
</dbReference>
<comment type="function">
    <text evidence="1">Methylates ribosomal protein L11.</text>
</comment>
<comment type="catalytic activity">
    <reaction evidence="1">
        <text>L-lysyl-[protein] + 3 S-adenosyl-L-methionine = N(6),N(6),N(6)-trimethyl-L-lysyl-[protein] + 3 S-adenosyl-L-homocysteine + 3 H(+)</text>
        <dbReference type="Rhea" id="RHEA:54192"/>
        <dbReference type="Rhea" id="RHEA-COMP:9752"/>
        <dbReference type="Rhea" id="RHEA-COMP:13826"/>
        <dbReference type="ChEBI" id="CHEBI:15378"/>
        <dbReference type="ChEBI" id="CHEBI:29969"/>
        <dbReference type="ChEBI" id="CHEBI:57856"/>
        <dbReference type="ChEBI" id="CHEBI:59789"/>
        <dbReference type="ChEBI" id="CHEBI:61961"/>
    </reaction>
</comment>
<comment type="subcellular location">
    <subcellularLocation>
        <location evidence="1">Cytoplasm</location>
    </subcellularLocation>
</comment>
<comment type="similarity">
    <text evidence="1">Belongs to the methyltransferase superfamily. PrmA family.</text>
</comment>
<accession>Q043X8</accession>
<evidence type="ECO:0000255" key="1">
    <source>
        <dbReference type="HAMAP-Rule" id="MF_00735"/>
    </source>
</evidence>
<reference key="1">
    <citation type="journal article" date="2006" name="Proc. Natl. Acad. Sci. U.S.A.">
        <title>Comparative genomics of the lactic acid bacteria.</title>
        <authorList>
            <person name="Makarova K.S."/>
            <person name="Slesarev A."/>
            <person name="Wolf Y.I."/>
            <person name="Sorokin A."/>
            <person name="Mirkin B."/>
            <person name="Koonin E.V."/>
            <person name="Pavlov A."/>
            <person name="Pavlova N."/>
            <person name="Karamychev V."/>
            <person name="Polouchine N."/>
            <person name="Shakhova V."/>
            <person name="Grigoriev I."/>
            <person name="Lou Y."/>
            <person name="Rohksar D."/>
            <person name="Lucas S."/>
            <person name="Huang K."/>
            <person name="Goodstein D.M."/>
            <person name="Hawkins T."/>
            <person name="Plengvidhya V."/>
            <person name="Welker D."/>
            <person name="Hughes J."/>
            <person name="Goh Y."/>
            <person name="Benson A."/>
            <person name="Baldwin K."/>
            <person name="Lee J.-H."/>
            <person name="Diaz-Muniz I."/>
            <person name="Dosti B."/>
            <person name="Smeianov V."/>
            <person name="Wechter W."/>
            <person name="Barabote R."/>
            <person name="Lorca G."/>
            <person name="Altermann E."/>
            <person name="Barrangou R."/>
            <person name="Ganesan B."/>
            <person name="Xie Y."/>
            <person name="Rawsthorne H."/>
            <person name="Tamir D."/>
            <person name="Parker C."/>
            <person name="Breidt F."/>
            <person name="Broadbent J.R."/>
            <person name="Hutkins R."/>
            <person name="O'Sullivan D."/>
            <person name="Steele J."/>
            <person name="Unlu G."/>
            <person name="Saier M.H. Jr."/>
            <person name="Klaenhammer T."/>
            <person name="Richardson P."/>
            <person name="Kozyavkin S."/>
            <person name="Weimer B.C."/>
            <person name="Mills D.A."/>
        </authorList>
    </citation>
    <scope>NUCLEOTIDE SEQUENCE [LARGE SCALE GENOMIC DNA]</scope>
    <source>
        <strain>ATCC 33323 / DSM 20243 / BCRC 14619 / CIP 102991 / JCM 1131 / KCTC 3163 / NCIMB 11718 / NCTC 13722 / AM63</strain>
    </source>
</reference>
<name>PRMA_LACGA</name>
<feature type="chain" id="PRO_1000062125" description="Ribosomal protein L11 methyltransferase">
    <location>
        <begin position="1"/>
        <end position="315"/>
    </location>
</feature>
<feature type="binding site" evidence="1">
    <location>
        <position position="164"/>
    </location>
    <ligand>
        <name>S-adenosyl-L-methionine</name>
        <dbReference type="ChEBI" id="CHEBI:59789"/>
    </ligand>
</feature>
<feature type="binding site" evidence="1">
    <location>
        <position position="185"/>
    </location>
    <ligand>
        <name>S-adenosyl-L-methionine</name>
        <dbReference type="ChEBI" id="CHEBI:59789"/>
    </ligand>
</feature>
<feature type="binding site" evidence="1">
    <location>
        <position position="207"/>
    </location>
    <ligand>
        <name>S-adenosyl-L-methionine</name>
        <dbReference type="ChEBI" id="CHEBI:59789"/>
    </ligand>
</feature>
<feature type="binding site" evidence="1">
    <location>
        <position position="249"/>
    </location>
    <ligand>
        <name>S-adenosyl-L-methionine</name>
        <dbReference type="ChEBI" id="CHEBI:59789"/>
    </ligand>
</feature>
<keyword id="KW-0963">Cytoplasm</keyword>
<keyword id="KW-0489">Methyltransferase</keyword>
<keyword id="KW-0949">S-adenosyl-L-methionine</keyword>
<keyword id="KW-0808">Transferase</keyword>
<sequence>MKLLAVKVECSHELEDGLSFFMQDELDAQGIESRKRSDFVAEGQKHDSSLVELDDIENLPKDLELTAYFNYENADKKELVKKITDKIAEMKGYGLNTGEVSISTKEVADEDWNTAWQKYYHVIDFSRHLAIVPEWEDYHPAFSDQKLIRLDPGLAFGTGGHTTTQLVLLAMERALVKPMSVLDIGTGSGILAIAASKLGASHVLGTDISDEAVTAAKENIALNDVNNINVRKANLLKDIDDKYDLIVANILADILLELIPDLDSHLNKEGKVIFSGIDYLQLPKVEKALAENNFEIKMKMQEGRWIGLLIARKPD</sequence>
<proteinExistence type="inferred from homology"/>
<gene>
    <name evidence="1" type="primary">prmA</name>
    <name type="ordered locus">LGAS_0855</name>
</gene>